<protein>
    <recommendedName>
        <fullName evidence="1">Chorismate synthase</fullName>
        <shortName evidence="1">CS</shortName>
        <ecNumber evidence="1">4.2.3.5</ecNumber>
    </recommendedName>
    <alternativeName>
        <fullName evidence="1">5-enolpyruvylshikimate-3-phosphate phospholyase</fullName>
    </alternativeName>
</protein>
<feature type="chain" id="PRO_0000322423" description="Chorismate synthase">
    <location>
        <begin position="1"/>
        <end position="389"/>
    </location>
</feature>
<feature type="binding site" evidence="1">
    <location>
        <position position="40"/>
    </location>
    <ligand>
        <name>NADP(+)</name>
        <dbReference type="ChEBI" id="CHEBI:58349"/>
    </ligand>
</feature>
<feature type="binding site" evidence="1">
    <location>
        <position position="46"/>
    </location>
    <ligand>
        <name>NADP(+)</name>
        <dbReference type="ChEBI" id="CHEBI:58349"/>
    </ligand>
</feature>
<feature type="binding site" evidence="1">
    <location>
        <begin position="130"/>
        <end position="132"/>
    </location>
    <ligand>
        <name>FMN</name>
        <dbReference type="ChEBI" id="CHEBI:58210"/>
    </ligand>
</feature>
<feature type="binding site" evidence="1">
    <location>
        <begin position="251"/>
        <end position="252"/>
    </location>
    <ligand>
        <name>FMN</name>
        <dbReference type="ChEBI" id="CHEBI:58210"/>
    </ligand>
</feature>
<feature type="binding site" evidence="1">
    <location>
        <position position="297"/>
    </location>
    <ligand>
        <name>FMN</name>
        <dbReference type="ChEBI" id="CHEBI:58210"/>
    </ligand>
</feature>
<feature type="binding site" evidence="1">
    <location>
        <begin position="312"/>
        <end position="316"/>
    </location>
    <ligand>
        <name>FMN</name>
        <dbReference type="ChEBI" id="CHEBI:58210"/>
    </ligand>
</feature>
<feature type="binding site" evidence="1">
    <location>
        <position position="338"/>
    </location>
    <ligand>
        <name>FMN</name>
        <dbReference type="ChEBI" id="CHEBI:58210"/>
    </ligand>
</feature>
<proteinExistence type="inferred from homology"/>
<keyword id="KW-0028">Amino-acid biosynthesis</keyword>
<keyword id="KW-0057">Aromatic amino acid biosynthesis</keyword>
<keyword id="KW-0274">FAD</keyword>
<keyword id="KW-0285">Flavoprotein</keyword>
<keyword id="KW-0288">FMN</keyword>
<keyword id="KW-0456">Lyase</keyword>
<keyword id="KW-0521">NADP</keyword>
<reference key="1">
    <citation type="journal article" date="2009" name="Appl. Environ. Microbiol.">
        <title>Three genomes from the phylum Acidobacteria provide insight into the lifestyles of these microorganisms in soils.</title>
        <authorList>
            <person name="Ward N.L."/>
            <person name="Challacombe J.F."/>
            <person name="Janssen P.H."/>
            <person name="Henrissat B."/>
            <person name="Coutinho P.M."/>
            <person name="Wu M."/>
            <person name="Xie G."/>
            <person name="Haft D.H."/>
            <person name="Sait M."/>
            <person name="Badger J."/>
            <person name="Barabote R.D."/>
            <person name="Bradley B."/>
            <person name="Brettin T.S."/>
            <person name="Brinkac L.M."/>
            <person name="Bruce D."/>
            <person name="Creasy T."/>
            <person name="Daugherty S.C."/>
            <person name="Davidsen T.M."/>
            <person name="DeBoy R.T."/>
            <person name="Detter J.C."/>
            <person name="Dodson R.J."/>
            <person name="Durkin A.S."/>
            <person name="Ganapathy A."/>
            <person name="Gwinn-Giglio M."/>
            <person name="Han C.S."/>
            <person name="Khouri H."/>
            <person name="Kiss H."/>
            <person name="Kothari S.P."/>
            <person name="Madupu R."/>
            <person name="Nelson K.E."/>
            <person name="Nelson W.C."/>
            <person name="Paulsen I."/>
            <person name="Penn K."/>
            <person name="Ren Q."/>
            <person name="Rosovitz M.J."/>
            <person name="Selengut J.D."/>
            <person name="Shrivastava S."/>
            <person name="Sullivan S.A."/>
            <person name="Tapia R."/>
            <person name="Thompson L.S."/>
            <person name="Watkins K.L."/>
            <person name="Yang Q."/>
            <person name="Yu C."/>
            <person name="Zafar N."/>
            <person name="Zhou L."/>
            <person name="Kuske C.R."/>
        </authorList>
    </citation>
    <scope>NUCLEOTIDE SEQUENCE [LARGE SCALE GENOMIC DNA]</scope>
    <source>
        <strain>Ellin6076</strain>
    </source>
</reference>
<evidence type="ECO:0000255" key="1">
    <source>
        <dbReference type="HAMAP-Rule" id="MF_00300"/>
    </source>
</evidence>
<sequence length="389" mass="42108">MLRFETAGESHGECLVATMNGLPAGIPISLETVNRELWRRQQGYGRGGRMKIETDKAEIVAGVRHSRTIGAPLAIIIRNKDWQNWTEILPVEDAGSGADRKPVTRPRPGHADLAGAIKYNFHDARYILERASARETTARVAVGAIAKALLAEFGIQVLSHVIAVGSVRLERAASWDELVALSLRDQVLLGCVDAETEARMKEVVDEAYRTGDTVGGVFEVVARGLPIGLGSHVTWDSRLDGRLAQAIVSMQAVKGVEVGFAAEGAASFGSKVQDTIHYDREAHHFTRGANRAGGIEGGMTNGQDILVRGMLKPISTLRRPLESVDLLTREPSPAAYERSDVCVVPAAGVIGEAMVAIVLAQAFLEKFGGDSLTETRRNFDSYLEQVKNY</sequence>
<organism>
    <name type="scientific">Solibacter usitatus (strain Ellin6076)</name>
    <dbReference type="NCBI Taxonomy" id="234267"/>
    <lineage>
        <taxon>Bacteria</taxon>
        <taxon>Pseudomonadati</taxon>
        <taxon>Acidobacteriota</taxon>
        <taxon>Terriglobia</taxon>
        <taxon>Bryobacterales</taxon>
        <taxon>Solibacteraceae</taxon>
        <taxon>Candidatus Solibacter</taxon>
    </lineage>
</organism>
<dbReference type="EC" id="4.2.3.5" evidence="1"/>
<dbReference type="EMBL" id="CP000473">
    <property type="protein sequence ID" value="ABJ83733.1"/>
    <property type="molecule type" value="Genomic_DNA"/>
</dbReference>
<dbReference type="SMR" id="Q023V7"/>
<dbReference type="FunCoup" id="Q023V7">
    <property type="interactions" value="544"/>
</dbReference>
<dbReference type="STRING" id="234267.Acid_2745"/>
<dbReference type="KEGG" id="sus:Acid_2745"/>
<dbReference type="eggNOG" id="COG0082">
    <property type="taxonomic scope" value="Bacteria"/>
</dbReference>
<dbReference type="HOGENOM" id="CLU_034547_2_0_0"/>
<dbReference type="InParanoid" id="Q023V7"/>
<dbReference type="OrthoDB" id="9771806at2"/>
<dbReference type="UniPathway" id="UPA00053">
    <property type="reaction ID" value="UER00090"/>
</dbReference>
<dbReference type="GO" id="GO:0005829">
    <property type="term" value="C:cytosol"/>
    <property type="evidence" value="ECO:0007669"/>
    <property type="project" value="TreeGrafter"/>
</dbReference>
<dbReference type="GO" id="GO:0004107">
    <property type="term" value="F:chorismate synthase activity"/>
    <property type="evidence" value="ECO:0007669"/>
    <property type="project" value="UniProtKB-UniRule"/>
</dbReference>
<dbReference type="GO" id="GO:0010181">
    <property type="term" value="F:FMN binding"/>
    <property type="evidence" value="ECO:0007669"/>
    <property type="project" value="TreeGrafter"/>
</dbReference>
<dbReference type="GO" id="GO:0008652">
    <property type="term" value="P:amino acid biosynthetic process"/>
    <property type="evidence" value="ECO:0007669"/>
    <property type="project" value="UniProtKB-KW"/>
</dbReference>
<dbReference type="GO" id="GO:0009073">
    <property type="term" value="P:aromatic amino acid family biosynthetic process"/>
    <property type="evidence" value="ECO:0007669"/>
    <property type="project" value="UniProtKB-KW"/>
</dbReference>
<dbReference type="GO" id="GO:0009423">
    <property type="term" value="P:chorismate biosynthetic process"/>
    <property type="evidence" value="ECO:0007669"/>
    <property type="project" value="UniProtKB-UniRule"/>
</dbReference>
<dbReference type="CDD" id="cd07304">
    <property type="entry name" value="Chorismate_synthase"/>
    <property type="match status" value="1"/>
</dbReference>
<dbReference type="FunFam" id="3.60.150.10:FF:000002">
    <property type="entry name" value="Chorismate synthase"/>
    <property type="match status" value="1"/>
</dbReference>
<dbReference type="Gene3D" id="3.60.150.10">
    <property type="entry name" value="Chorismate synthase AroC"/>
    <property type="match status" value="1"/>
</dbReference>
<dbReference type="HAMAP" id="MF_00300">
    <property type="entry name" value="Chorismate_synth"/>
    <property type="match status" value="1"/>
</dbReference>
<dbReference type="InterPro" id="IPR000453">
    <property type="entry name" value="Chorismate_synth"/>
</dbReference>
<dbReference type="InterPro" id="IPR035904">
    <property type="entry name" value="Chorismate_synth_AroC_sf"/>
</dbReference>
<dbReference type="InterPro" id="IPR020541">
    <property type="entry name" value="Chorismate_synthase_CS"/>
</dbReference>
<dbReference type="NCBIfam" id="TIGR00033">
    <property type="entry name" value="aroC"/>
    <property type="match status" value="1"/>
</dbReference>
<dbReference type="NCBIfam" id="NF003793">
    <property type="entry name" value="PRK05382.1"/>
    <property type="match status" value="1"/>
</dbReference>
<dbReference type="PANTHER" id="PTHR21085">
    <property type="entry name" value="CHORISMATE SYNTHASE"/>
    <property type="match status" value="1"/>
</dbReference>
<dbReference type="PANTHER" id="PTHR21085:SF0">
    <property type="entry name" value="CHORISMATE SYNTHASE"/>
    <property type="match status" value="1"/>
</dbReference>
<dbReference type="Pfam" id="PF01264">
    <property type="entry name" value="Chorismate_synt"/>
    <property type="match status" value="1"/>
</dbReference>
<dbReference type="PIRSF" id="PIRSF001456">
    <property type="entry name" value="Chorismate_synth"/>
    <property type="match status" value="1"/>
</dbReference>
<dbReference type="SUPFAM" id="SSF103263">
    <property type="entry name" value="Chorismate synthase, AroC"/>
    <property type="match status" value="1"/>
</dbReference>
<dbReference type="PROSITE" id="PS00788">
    <property type="entry name" value="CHORISMATE_SYNTHASE_2"/>
    <property type="match status" value="1"/>
</dbReference>
<dbReference type="PROSITE" id="PS00789">
    <property type="entry name" value="CHORISMATE_SYNTHASE_3"/>
    <property type="match status" value="1"/>
</dbReference>
<name>AROC_SOLUE</name>
<gene>
    <name evidence="1" type="primary">aroC</name>
    <name type="ordered locus">Acid_2745</name>
</gene>
<comment type="function">
    <text evidence="1">Catalyzes the anti-1,4-elimination of the C-3 phosphate and the C-6 proR hydrogen from 5-enolpyruvylshikimate-3-phosphate (EPSP) to yield chorismate, which is the branch point compound that serves as the starting substrate for the three terminal pathways of aromatic amino acid biosynthesis. This reaction introduces a second double bond into the aromatic ring system.</text>
</comment>
<comment type="catalytic activity">
    <reaction evidence="1">
        <text>5-O-(1-carboxyvinyl)-3-phosphoshikimate = chorismate + phosphate</text>
        <dbReference type="Rhea" id="RHEA:21020"/>
        <dbReference type="ChEBI" id="CHEBI:29748"/>
        <dbReference type="ChEBI" id="CHEBI:43474"/>
        <dbReference type="ChEBI" id="CHEBI:57701"/>
        <dbReference type="EC" id="4.2.3.5"/>
    </reaction>
</comment>
<comment type="cofactor">
    <cofactor evidence="1">
        <name>FMNH2</name>
        <dbReference type="ChEBI" id="CHEBI:57618"/>
    </cofactor>
    <text evidence="1">Reduced FMN (FMNH(2)).</text>
</comment>
<comment type="pathway">
    <text evidence="1">Metabolic intermediate biosynthesis; chorismate biosynthesis; chorismate from D-erythrose 4-phosphate and phosphoenolpyruvate: step 7/7.</text>
</comment>
<comment type="subunit">
    <text evidence="1">Homotetramer.</text>
</comment>
<comment type="similarity">
    <text evidence="1">Belongs to the chorismate synthase family.</text>
</comment>
<accession>Q023V7</accession>